<keyword id="KW-0479">Metal-binding</keyword>
<keyword id="KW-0687">Ribonucleoprotein</keyword>
<keyword id="KW-0689">Ribosomal protein</keyword>
<keyword id="KW-0694">RNA-binding</keyword>
<keyword id="KW-0699">rRNA-binding</keyword>
<keyword id="KW-0862">Zinc</keyword>
<organism>
    <name type="scientific">Roseiflexus sp. (strain RS-1)</name>
    <dbReference type="NCBI Taxonomy" id="357808"/>
    <lineage>
        <taxon>Bacteria</taxon>
        <taxon>Bacillati</taxon>
        <taxon>Chloroflexota</taxon>
        <taxon>Chloroflexia</taxon>
        <taxon>Chloroflexales</taxon>
        <taxon>Roseiflexineae</taxon>
        <taxon>Roseiflexaceae</taxon>
        <taxon>Roseiflexus</taxon>
    </lineage>
</organism>
<evidence type="ECO:0000255" key="1">
    <source>
        <dbReference type="HAMAP-Rule" id="MF_01364"/>
    </source>
</evidence>
<evidence type="ECO:0000305" key="2"/>
<feature type="chain" id="PRO_1000067963" description="Small ribosomal subunit protein uS14">
    <location>
        <begin position="1"/>
        <end position="61"/>
    </location>
</feature>
<feature type="binding site" evidence="1">
    <location>
        <position position="24"/>
    </location>
    <ligand>
        <name>Zn(2+)</name>
        <dbReference type="ChEBI" id="CHEBI:29105"/>
    </ligand>
</feature>
<feature type="binding site" evidence="1">
    <location>
        <position position="27"/>
    </location>
    <ligand>
        <name>Zn(2+)</name>
        <dbReference type="ChEBI" id="CHEBI:29105"/>
    </ligand>
</feature>
<feature type="binding site" evidence="1">
    <location>
        <position position="40"/>
    </location>
    <ligand>
        <name>Zn(2+)</name>
        <dbReference type="ChEBI" id="CHEBI:29105"/>
    </ligand>
</feature>
<feature type="binding site" evidence="1">
    <location>
        <position position="43"/>
    </location>
    <ligand>
        <name>Zn(2+)</name>
        <dbReference type="ChEBI" id="CHEBI:29105"/>
    </ligand>
</feature>
<sequence>MARKALIVKAQRPQKYKVRAYNRCKICGRPRAYMRKFGMCRICFREHALRGLIPGVTKSSW</sequence>
<name>RS14Z_ROSS1</name>
<gene>
    <name evidence="1" type="primary">rpsZ</name>
    <name evidence="1" type="synonym">rpsN</name>
    <name type="ordered locus">RoseRS_1172</name>
</gene>
<dbReference type="EMBL" id="CP000686">
    <property type="protein sequence ID" value="ABQ89579.1"/>
    <property type="molecule type" value="Genomic_DNA"/>
</dbReference>
<dbReference type="SMR" id="A5USH6"/>
<dbReference type="STRING" id="357808.RoseRS_1172"/>
<dbReference type="KEGG" id="rrs:RoseRS_1172"/>
<dbReference type="eggNOG" id="COG0199">
    <property type="taxonomic scope" value="Bacteria"/>
</dbReference>
<dbReference type="HOGENOM" id="CLU_139869_3_0_0"/>
<dbReference type="OrthoDB" id="9810484at2"/>
<dbReference type="Proteomes" id="UP000006554">
    <property type="component" value="Chromosome"/>
</dbReference>
<dbReference type="GO" id="GO:0005737">
    <property type="term" value="C:cytoplasm"/>
    <property type="evidence" value="ECO:0007669"/>
    <property type="project" value="UniProtKB-ARBA"/>
</dbReference>
<dbReference type="GO" id="GO:0015935">
    <property type="term" value="C:small ribosomal subunit"/>
    <property type="evidence" value="ECO:0007669"/>
    <property type="project" value="TreeGrafter"/>
</dbReference>
<dbReference type="GO" id="GO:0019843">
    <property type="term" value="F:rRNA binding"/>
    <property type="evidence" value="ECO:0007669"/>
    <property type="project" value="UniProtKB-UniRule"/>
</dbReference>
<dbReference type="GO" id="GO:0003735">
    <property type="term" value="F:structural constituent of ribosome"/>
    <property type="evidence" value="ECO:0007669"/>
    <property type="project" value="InterPro"/>
</dbReference>
<dbReference type="GO" id="GO:0008270">
    <property type="term" value="F:zinc ion binding"/>
    <property type="evidence" value="ECO:0007669"/>
    <property type="project" value="UniProtKB-UniRule"/>
</dbReference>
<dbReference type="GO" id="GO:0006412">
    <property type="term" value="P:translation"/>
    <property type="evidence" value="ECO:0007669"/>
    <property type="project" value="UniProtKB-UniRule"/>
</dbReference>
<dbReference type="FunFam" id="4.10.830.10:FF:000001">
    <property type="entry name" value="30S ribosomal protein S14 type Z"/>
    <property type="match status" value="1"/>
</dbReference>
<dbReference type="Gene3D" id="4.10.830.10">
    <property type="entry name" value="30s Ribosomal Protein S14, Chain N"/>
    <property type="match status" value="1"/>
</dbReference>
<dbReference type="HAMAP" id="MF_01364_B">
    <property type="entry name" value="Ribosomal_uS14_2_B"/>
    <property type="match status" value="1"/>
</dbReference>
<dbReference type="InterPro" id="IPR001209">
    <property type="entry name" value="Ribosomal_uS14"/>
</dbReference>
<dbReference type="InterPro" id="IPR023053">
    <property type="entry name" value="Ribosomal_uS14_bact"/>
</dbReference>
<dbReference type="InterPro" id="IPR018271">
    <property type="entry name" value="Ribosomal_uS14_CS"/>
</dbReference>
<dbReference type="InterPro" id="IPR043140">
    <property type="entry name" value="Ribosomal_uS14_sf"/>
</dbReference>
<dbReference type="NCBIfam" id="NF005974">
    <property type="entry name" value="PRK08061.1"/>
    <property type="match status" value="1"/>
</dbReference>
<dbReference type="PANTHER" id="PTHR19836">
    <property type="entry name" value="30S RIBOSOMAL PROTEIN S14"/>
    <property type="match status" value="1"/>
</dbReference>
<dbReference type="PANTHER" id="PTHR19836:SF19">
    <property type="entry name" value="SMALL RIBOSOMAL SUBUNIT PROTEIN US14M"/>
    <property type="match status" value="1"/>
</dbReference>
<dbReference type="Pfam" id="PF00253">
    <property type="entry name" value="Ribosomal_S14"/>
    <property type="match status" value="1"/>
</dbReference>
<dbReference type="SUPFAM" id="SSF57716">
    <property type="entry name" value="Glucocorticoid receptor-like (DNA-binding domain)"/>
    <property type="match status" value="1"/>
</dbReference>
<dbReference type="PROSITE" id="PS00527">
    <property type="entry name" value="RIBOSOMAL_S14"/>
    <property type="match status" value="1"/>
</dbReference>
<proteinExistence type="inferred from homology"/>
<comment type="function">
    <text evidence="1">Binds 16S rRNA, required for the assembly of 30S particles and may also be responsible for determining the conformation of the 16S rRNA at the A site.</text>
</comment>
<comment type="cofactor">
    <cofactor evidence="1">
        <name>Zn(2+)</name>
        <dbReference type="ChEBI" id="CHEBI:29105"/>
    </cofactor>
    <text evidence="1">Binds 1 zinc ion per subunit.</text>
</comment>
<comment type="subunit">
    <text evidence="1">Part of the 30S ribosomal subunit. Contacts proteins S3 and S10.</text>
</comment>
<comment type="similarity">
    <text evidence="1">Belongs to the universal ribosomal protein uS14 family. Zinc-binding uS14 subfamily.</text>
</comment>
<reference key="1">
    <citation type="submission" date="2007-04" db="EMBL/GenBank/DDBJ databases">
        <title>Complete sequence of Roseiflexus sp. RS-1.</title>
        <authorList>
            <consortium name="US DOE Joint Genome Institute"/>
            <person name="Copeland A."/>
            <person name="Lucas S."/>
            <person name="Lapidus A."/>
            <person name="Barry K."/>
            <person name="Detter J.C."/>
            <person name="Glavina del Rio T."/>
            <person name="Hammon N."/>
            <person name="Israni S."/>
            <person name="Dalin E."/>
            <person name="Tice H."/>
            <person name="Pitluck S."/>
            <person name="Chertkov O."/>
            <person name="Brettin T."/>
            <person name="Bruce D."/>
            <person name="Han C."/>
            <person name="Schmutz J."/>
            <person name="Larimer F."/>
            <person name="Land M."/>
            <person name="Hauser L."/>
            <person name="Kyrpides N."/>
            <person name="Mikhailova N."/>
            <person name="Bryant D.A."/>
            <person name="Richardson P."/>
        </authorList>
    </citation>
    <scope>NUCLEOTIDE SEQUENCE [LARGE SCALE GENOMIC DNA]</scope>
    <source>
        <strain>RS-1</strain>
    </source>
</reference>
<accession>A5USH6</accession>
<protein>
    <recommendedName>
        <fullName evidence="1">Small ribosomal subunit protein uS14</fullName>
    </recommendedName>
    <alternativeName>
        <fullName evidence="2">30S ribosomal protein S14 type Z</fullName>
    </alternativeName>
</protein>